<accession>Q9M462</accession>
<protein>
    <recommendedName>
        <fullName>Glucose-1-phosphate adenylyltransferase small subunit, chloroplastic</fullName>
        <ecNumber>2.7.7.27</ecNumber>
    </recommendedName>
    <alternativeName>
        <fullName>ADP-glucose pyrophosphorylase</fullName>
    </alternativeName>
    <alternativeName>
        <fullName>ADP-glucose synthase</fullName>
    </alternativeName>
    <alternativeName>
        <fullName>AGPase B</fullName>
    </alternativeName>
    <alternativeName>
        <fullName>Alpha-D-glucose-1-phosphate adenyl transferase</fullName>
    </alternativeName>
</protein>
<name>GLGS_BRANA</name>
<feature type="transit peptide" description="Chloroplast" evidence="2">
    <location>
        <begin position="1"/>
        <end position="71"/>
    </location>
</feature>
<feature type="chain" id="PRO_0000011151" description="Glucose-1-phosphate adenylyltransferase small subunit, chloroplastic">
    <location>
        <begin position="72"/>
        <end position="520"/>
    </location>
</feature>
<feature type="region of interest" description="Disordered" evidence="3">
    <location>
        <begin position="1"/>
        <end position="81"/>
    </location>
</feature>
<feature type="compositionally biased region" description="Low complexity" evidence="3">
    <location>
        <begin position="14"/>
        <end position="27"/>
    </location>
</feature>
<feature type="compositionally biased region" description="Polar residues" evidence="3">
    <location>
        <begin position="28"/>
        <end position="51"/>
    </location>
</feature>
<evidence type="ECO:0000250" key="1"/>
<evidence type="ECO:0000255" key="2"/>
<evidence type="ECO:0000256" key="3">
    <source>
        <dbReference type="SAM" id="MobiDB-lite"/>
    </source>
</evidence>
<evidence type="ECO:0000305" key="4"/>
<organism>
    <name type="scientific">Brassica napus</name>
    <name type="common">Rape</name>
    <dbReference type="NCBI Taxonomy" id="3708"/>
    <lineage>
        <taxon>Eukaryota</taxon>
        <taxon>Viridiplantae</taxon>
        <taxon>Streptophyta</taxon>
        <taxon>Embryophyta</taxon>
        <taxon>Tracheophyta</taxon>
        <taxon>Spermatophyta</taxon>
        <taxon>Magnoliopsida</taxon>
        <taxon>eudicotyledons</taxon>
        <taxon>Gunneridae</taxon>
        <taxon>Pentapetalae</taxon>
        <taxon>rosids</taxon>
        <taxon>malvids</taxon>
        <taxon>Brassicales</taxon>
        <taxon>Brassicaceae</taxon>
        <taxon>Brassiceae</taxon>
        <taxon>Brassica</taxon>
    </lineage>
</organism>
<keyword id="KW-0021">Allosteric enzyme</keyword>
<keyword id="KW-0067">ATP-binding</keyword>
<keyword id="KW-0150">Chloroplast</keyword>
<keyword id="KW-0547">Nucleotide-binding</keyword>
<keyword id="KW-0548">Nucleotidyltransferase</keyword>
<keyword id="KW-0934">Plastid</keyword>
<keyword id="KW-0750">Starch biosynthesis</keyword>
<keyword id="KW-0808">Transferase</keyword>
<keyword id="KW-0809">Transit peptide</keyword>
<gene>
    <name type="primary">AGPS1</name>
</gene>
<sequence length="520" mass="57045">MATMAAIGSLKVPSSSSNHTRRLSSSSQRKTLSFSSSSLTGEKLNPTQEIIISNLPRGNERRTPSIVSPKAVSDSQNSQTCLDPDASRSVLGIILGGGAGTRLYPLTKKRAKPAVPLGANYRLIDIPVSNCLNSNISKIYVLTQFNSASLNRHLSRAYASNMGGYKNEGFVEVLAAQQSPENPNWFQGTADAVRQYLWLFEEHNVLEFLVLAGDHLYRMDYEKFIQAHRETDADITVAALPMDEKRATAFGLMKIDDEGRIIEFAEKPKGEQLKAMKVDTTILGLDDERAKEMPFIASMGIYVVSKNVMLDLLRDQFPGANDFGSEVIPGATDLGLRVQAYLYDGYWEDIGTIEAFYNANLGITKKPVPDFSFYDRSAPIYTQPRYLPPSKMLDADVTDSVIGEGCVIKNCKIHHSVIGLRSCISEGAIIEDTLLMGADYYETDADRTLLAAKGSIPIGIGRDSHIKRAIIDKNARIGDNVKIINTDNVQEAARETDGYFIKSGIVTVIKDALIPSGTVI</sequence>
<reference key="1">
    <citation type="submission" date="2000-01" db="EMBL/GenBank/DDBJ databases">
        <title>Isolation and analysis of a cDNA clone encoding the small subunit of ADP-glucose pyrophosphorylase in the plastids of seeds and leaves of Oilseed rape (Brassica napus).</title>
        <authorList>
            <person name="Zawodny S."/>
            <person name="Martini N."/>
        </authorList>
    </citation>
    <scope>NUCLEOTIDE SEQUENCE [MRNA]</scope>
    <source>
        <strain>cv. Drakkar</strain>
        <tissue>Seed</tissue>
    </source>
</reference>
<dbReference type="EC" id="2.7.7.27"/>
<dbReference type="EMBL" id="AJ271162">
    <property type="protein sequence ID" value="CAB89863.1"/>
    <property type="molecule type" value="mRNA"/>
</dbReference>
<dbReference type="RefSeq" id="NP_001303131.1">
    <property type="nucleotide sequence ID" value="NM_001316202.1"/>
</dbReference>
<dbReference type="SMR" id="Q9M462"/>
<dbReference type="EnsemblPlants" id="CDY27884">
    <property type="protein sequence ID" value="CDY27884"/>
    <property type="gene ID" value="GSBRNA2T00038740001"/>
</dbReference>
<dbReference type="GeneID" id="106366674"/>
<dbReference type="Gramene" id="CDY27884">
    <property type="protein sequence ID" value="CDY27884"/>
    <property type="gene ID" value="GSBRNA2T00038740001"/>
</dbReference>
<dbReference type="KEGG" id="bna:106366674"/>
<dbReference type="OMA" id="AYHEASM"/>
<dbReference type="OrthoDB" id="1733332at2759"/>
<dbReference type="UniPathway" id="UPA00152"/>
<dbReference type="GO" id="GO:0009507">
    <property type="term" value="C:chloroplast"/>
    <property type="evidence" value="ECO:0007669"/>
    <property type="project" value="UniProtKB-SubCell"/>
</dbReference>
<dbReference type="GO" id="GO:0005524">
    <property type="term" value="F:ATP binding"/>
    <property type="evidence" value="ECO:0007669"/>
    <property type="project" value="UniProtKB-KW"/>
</dbReference>
<dbReference type="GO" id="GO:0008878">
    <property type="term" value="F:glucose-1-phosphate adenylyltransferase activity"/>
    <property type="evidence" value="ECO:0007669"/>
    <property type="project" value="UniProtKB-EC"/>
</dbReference>
<dbReference type="GO" id="GO:0005978">
    <property type="term" value="P:glycogen biosynthetic process"/>
    <property type="evidence" value="ECO:0007669"/>
    <property type="project" value="InterPro"/>
</dbReference>
<dbReference type="GO" id="GO:0019252">
    <property type="term" value="P:starch biosynthetic process"/>
    <property type="evidence" value="ECO:0007669"/>
    <property type="project" value="UniProtKB-UniPathway"/>
</dbReference>
<dbReference type="CDD" id="cd02508">
    <property type="entry name" value="ADP_Glucose_PP"/>
    <property type="match status" value="1"/>
</dbReference>
<dbReference type="CDD" id="cd04651">
    <property type="entry name" value="LbH_G1P_AT_C"/>
    <property type="match status" value="1"/>
</dbReference>
<dbReference type="FunFam" id="2.160.10.10:FF:000010">
    <property type="entry name" value="Glucose-1-phosphate adenylyltransferase"/>
    <property type="match status" value="1"/>
</dbReference>
<dbReference type="FunFam" id="3.90.550.10:FF:000030">
    <property type="entry name" value="Glucose-1-phosphate adenylyltransferase"/>
    <property type="match status" value="1"/>
</dbReference>
<dbReference type="Gene3D" id="2.160.10.10">
    <property type="entry name" value="Hexapeptide repeat proteins"/>
    <property type="match status" value="1"/>
</dbReference>
<dbReference type="Gene3D" id="3.90.550.10">
    <property type="entry name" value="Spore Coat Polysaccharide Biosynthesis Protein SpsA, Chain A"/>
    <property type="match status" value="1"/>
</dbReference>
<dbReference type="InterPro" id="IPR011831">
    <property type="entry name" value="ADP-Glc_PPase"/>
</dbReference>
<dbReference type="InterPro" id="IPR005836">
    <property type="entry name" value="ADP_Glu_pyroP_CS"/>
</dbReference>
<dbReference type="InterPro" id="IPR005835">
    <property type="entry name" value="NTP_transferase_dom"/>
</dbReference>
<dbReference type="InterPro" id="IPR029044">
    <property type="entry name" value="Nucleotide-diphossugar_trans"/>
</dbReference>
<dbReference type="InterPro" id="IPR011004">
    <property type="entry name" value="Trimer_LpxA-like_sf"/>
</dbReference>
<dbReference type="NCBIfam" id="TIGR02091">
    <property type="entry name" value="glgC"/>
    <property type="match status" value="1"/>
</dbReference>
<dbReference type="NCBIfam" id="NF002772">
    <property type="entry name" value="PRK02862.1"/>
    <property type="match status" value="1"/>
</dbReference>
<dbReference type="PANTHER" id="PTHR43523:SF24">
    <property type="entry name" value="GLUCOSE-1-PHOSPHATE ADENYLYLTRANSFERASE"/>
    <property type="match status" value="1"/>
</dbReference>
<dbReference type="PANTHER" id="PTHR43523">
    <property type="entry name" value="GLUCOSE-1-PHOSPHATE ADENYLYLTRANSFERASE-RELATED"/>
    <property type="match status" value="1"/>
</dbReference>
<dbReference type="Pfam" id="PF25247">
    <property type="entry name" value="LbH_GLGC"/>
    <property type="match status" value="1"/>
</dbReference>
<dbReference type="Pfam" id="PF00483">
    <property type="entry name" value="NTP_transferase"/>
    <property type="match status" value="1"/>
</dbReference>
<dbReference type="SUPFAM" id="SSF53448">
    <property type="entry name" value="Nucleotide-diphospho-sugar transferases"/>
    <property type="match status" value="1"/>
</dbReference>
<dbReference type="SUPFAM" id="SSF51161">
    <property type="entry name" value="Trimeric LpxA-like enzymes"/>
    <property type="match status" value="1"/>
</dbReference>
<dbReference type="PROSITE" id="PS00808">
    <property type="entry name" value="ADP_GLC_PYROPHOSPH_1"/>
    <property type="match status" value="1"/>
</dbReference>
<dbReference type="PROSITE" id="PS00809">
    <property type="entry name" value="ADP_GLC_PYROPHOSPH_2"/>
    <property type="match status" value="1"/>
</dbReference>
<dbReference type="PROSITE" id="PS00810">
    <property type="entry name" value="ADP_GLC_PYROPHOSPH_3"/>
    <property type="match status" value="1"/>
</dbReference>
<proteinExistence type="evidence at transcript level"/>
<comment type="function">
    <text>This protein plays a role in synthesis of starch. It catalyzes the synthesis of the activated glycosyl donor, ADP-glucose from Glc-1-P and ATP.</text>
</comment>
<comment type="catalytic activity">
    <reaction>
        <text>alpha-D-glucose 1-phosphate + ATP + H(+) = ADP-alpha-D-glucose + diphosphate</text>
        <dbReference type="Rhea" id="RHEA:12120"/>
        <dbReference type="ChEBI" id="CHEBI:15378"/>
        <dbReference type="ChEBI" id="CHEBI:30616"/>
        <dbReference type="ChEBI" id="CHEBI:33019"/>
        <dbReference type="ChEBI" id="CHEBI:57498"/>
        <dbReference type="ChEBI" id="CHEBI:58601"/>
        <dbReference type="EC" id="2.7.7.27"/>
    </reaction>
</comment>
<comment type="activity regulation">
    <text>Activated by 3'phosphoglycerate, inhibited by orthophosphate. Allosteric regulation.</text>
</comment>
<comment type="pathway">
    <text>Glycan biosynthesis; starch biosynthesis.</text>
</comment>
<comment type="subunit">
    <text>Heterotetramer.</text>
</comment>
<comment type="subcellular location">
    <subcellularLocation>
        <location evidence="1">Plastid</location>
        <location evidence="1">Chloroplast</location>
    </subcellularLocation>
</comment>
<comment type="tissue specificity">
    <text>Leaves.</text>
</comment>
<comment type="similarity">
    <text evidence="4">Belongs to the bacterial/plant glucose-1-phosphate adenylyltransferase family.</text>
</comment>